<name>CRY1_ERIRU</name>
<feature type="chain" id="PRO_0000261146" description="Cryptochrome-1">
    <location>
        <begin position="1"/>
        <end position="620"/>
    </location>
</feature>
<feature type="domain" description="Photolyase/cryptochrome alpha/beta">
    <location>
        <begin position="3"/>
        <end position="132"/>
    </location>
</feature>
<feature type="region of interest" description="Disordered" evidence="4">
    <location>
        <begin position="593"/>
        <end position="620"/>
    </location>
</feature>
<feature type="short sequence motif" description="LIR 1" evidence="2">
    <location>
        <begin position="50"/>
        <end position="54"/>
    </location>
</feature>
<feature type="short sequence motif" description="LIR 2" evidence="2">
    <location>
        <begin position="82"/>
        <end position="87"/>
    </location>
</feature>
<feature type="short sequence motif" description="LIR 3" evidence="2">
    <location>
        <begin position="151"/>
        <end position="156"/>
    </location>
</feature>
<feature type="short sequence motif" description="LIR 4" evidence="2">
    <location>
        <begin position="255"/>
        <end position="260"/>
    </location>
</feature>
<feature type="short sequence motif" description="LIR 5" evidence="2">
    <location>
        <begin position="271"/>
        <end position="276"/>
    </location>
</feature>
<feature type="short sequence motif" description="LIR 6" evidence="2">
    <location>
        <begin position="285"/>
        <end position="290"/>
    </location>
</feature>
<feature type="short sequence motif" description="LIR 7" evidence="2">
    <location>
        <begin position="335"/>
        <end position="339"/>
    </location>
</feature>
<feature type="short sequence motif" description="LIR 8" evidence="2">
    <location>
        <begin position="379"/>
        <end position="384"/>
    </location>
</feature>
<feature type="short sequence motif" description="LIR 9" evidence="2">
    <location>
        <begin position="395"/>
        <end position="400"/>
    </location>
</feature>
<feature type="short sequence motif" description="LIR 10" evidence="2">
    <location>
        <begin position="411"/>
        <end position="416"/>
    </location>
</feature>
<feature type="short sequence motif" description="LIR 11" evidence="2">
    <location>
        <begin position="430"/>
        <end position="435"/>
    </location>
</feature>
<feature type="short sequence motif" description="LIR 12" evidence="2">
    <location>
        <begin position="486"/>
        <end position="491"/>
    </location>
</feature>
<feature type="short sequence motif" description="LIR 13" evidence="2">
    <location>
        <begin position="492"/>
        <end position="497"/>
    </location>
</feature>
<feature type="binding site" evidence="2">
    <location>
        <position position="252"/>
    </location>
    <ligand>
        <name>FAD</name>
        <dbReference type="ChEBI" id="CHEBI:57692"/>
    </ligand>
</feature>
<feature type="binding site" evidence="2">
    <location>
        <position position="289"/>
    </location>
    <ligand>
        <name>FAD</name>
        <dbReference type="ChEBI" id="CHEBI:57692"/>
    </ligand>
</feature>
<feature type="binding site" evidence="2">
    <location>
        <position position="355"/>
    </location>
    <ligand>
        <name>FAD</name>
        <dbReference type="ChEBI" id="CHEBI:57692"/>
    </ligand>
</feature>
<feature type="binding site" evidence="2">
    <location>
        <begin position="387"/>
        <end position="389"/>
    </location>
    <ligand>
        <name>FAD</name>
        <dbReference type="ChEBI" id="CHEBI:57692"/>
    </ligand>
</feature>
<feature type="splice variant" id="VSP_021651" description="In isoform 1b." evidence="6">
    <original>YCQASSILHYAHGDNQQSHLLQAG</original>
    <variation>IMAVPVCRGSPNACNYGKPDKTSK</variation>
    <location>
        <begin position="564"/>
        <end position="587"/>
    </location>
</feature>
<feature type="splice variant" id="VSP_021652" description="In isoform 1b." evidence="6">
    <location>
        <begin position="588"/>
        <end position="620"/>
    </location>
</feature>
<reference key="1">
    <citation type="journal article" date="2004" name="Naturwissenschaften">
        <title>Retinal cryptochrome in a migratory passerine bird: a possible transducer for the avian magnetic compass.</title>
        <authorList>
            <person name="Moeller A."/>
            <person name="Sagasser S."/>
            <person name="Wiltschko W."/>
            <person name="Schierwater B."/>
        </authorList>
    </citation>
    <scope>NUCLEOTIDE SEQUENCE [MRNA] (ISOFORMS 1A AND 1B)</scope>
    <scope>TISSUE SPECIFICITY</scope>
    <source>
        <tissue>Retina</tissue>
    </source>
</reference>
<gene>
    <name type="primary">CRY1</name>
</gene>
<keyword id="KW-0025">Alternative splicing</keyword>
<keyword id="KW-0090">Biological rhythms</keyword>
<keyword id="KW-0157">Chromophore</keyword>
<keyword id="KW-0963">Cytoplasm</keyword>
<keyword id="KW-0238">DNA-binding</keyword>
<keyword id="KW-0274">FAD</keyword>
<keyword id="KW-0285">Flavoprotein</keyword>
<keyword id="KW-0547">Nucleotide-binding</keyword>
<keyword id="KW-0539">Nucleus</keyword>
<keyword id="KW-0600">Photoreceptor protein</keyword>
<keyword id="KW-0675">Receptor</keyword>
<keyword id="KW-0678">Repressor</keyword>
<keyword id="KW-0716">Sensory transduction</keyword>
<keyword id="KW-0804">Transcription</keyword>
<keyword id="KW-0805">Transcription regulation</keyword>
<sequence>MGVNAVHWFRKGLRLHDNPALRECIRGADTVRCVYILDPWFAGSSNVGINRWRFLLQCLEDLDANLRKLNSRLFVIRGQPADVFPRLFKEWNIAKLSIEYDSEPFGKERDAAIKKLASEAGVEVIVRISHTLYDLDKIIELNGGQPPLTYKRFQTLISRMEPLEMPVETITPEVMKKCTTPVFDDHDEKYGVPSLEELGFDTDGLPSAVWPGGETEALTRLERHLERKASVANFERPRMNANSLLASPTGLSPYLRFGCLSCRLFYFKLTDLYKKVKKNSSPPLSLYGQLLWREFFYTAATNNPRFDKMEGNPICVQIPWDKNPEALAKWAEGRTGFPWIDAIMTQLRQEGWIHHLARHAVACFLTRGDLWISWEEGMKVFEELLLDADWSVNAGSWMWLSCSSFFQQFFHCYCPVGFGRRTDPNGDYIRRYLPVLRGFPAKYIYDPWNAPESIQKAAKCIIGVNYPKPMVNHAEASRLNIERMKQIYQQLSRYRGLGLLATVPSNPNGNGNGGLMGYSPGESISGCGSTGGAQLGTGDGHTVVQSCTLGDSHSGTSGIQQQGYCQASSILHYAHGDNQQSHLLQAGRTALGTGISAGKRPNPEEETQSVGPKVQRQSTN</sequence>
<organism>
    <name type="scientific">Erithacus rubecula</name>
    <name type="common">European robin</name>
    <dbReference type="NCBI Taxonomy" id="37610"/>
    <lineage>
        <taxon>Eukaryota</taxon>
        <taxon>Metazoa</taxon>
        <taxon>Chordata</taxon>
        <taxon>Craniata</taxon>
        <taxon>Vertebrata</taxon>
        <taxon>Euteleostomi</taxon>
        <taxon>Archelosauria</taxon>
        <taxon>Archosauria</taxon>
        <taxon>Dinosauria</taxon>
        <taxon>Saurischia</taxon>
        <taxon>Theropoda</taxon>
        <taxon>Coelurosauria</taxon>
        <taxon>Aves</taxon>
        <taxon>Neognathae</taxon>
        <taxon>Neoaves</taxon>
        <taxon>Telluraves</taxon>
        <taxon>Australaves</taxon>
        <taxon>Passeriformes</taxon>
        <taxon>Turdidae</taxon>
        <taxon>Erithacus</taxon>
    </lineage>
</organism>
<proteinExistence type="evidence at transcript level"/>
<evidence type="ECO:0000250" key="1"/>
<evidence type="ECO:0000250" key="2">
    <source>
        <dbReference type="UniProtKB" id="P97784"/>
    </source>
</evidence>
<evidence type="ECO:0000250" key="3">
    <source>
        <dbReference type="UniProtKB" id="Q16526"/>
    </source>
</evidence>
<evidence type="ECO:0000256" key="4">
    <source>
        <dbReference type="SAM" id="MobiDB-lite"/>
    </source>
</evidence>
<evidence type="ECO:0000269" key="5">
    <source>
    </source>
</evidence>
<evidence type="ECO:0000303" key="6">
    <source>
    </source>
</evidence>
<evidence type="ECO:0000305" key="7"/>
<dbReference type="EMBL" id="AY585716">
    <property type="protein sequence ID" value="AAW48290.1"/>
    <property type="molecule type" value="mRNA"/>
</dbReference>
<dbReference type="EMBL" id="AY585717">
    <property type="protein sequence ID" value="AAW48291.1"/>
    <property type="molecule type" value="mRNA"/>
</dbReference>
<dbReference type="SMR" id="Q5IZC5"/>
<dbReference type="GO" id="GO:0005829">
    <property type="term" value="C:cytosol"/>
    <property type="evidence" value="ECO:0000314"/>
    <property type="project" value="AgBase"/>
</dbReference>
<dbReference type="GO" id="GO:0005634">
    <property type="term" value="C:nucleus"/>
    <property type="evidence" value="ECO:0007669"/>
    <property type="project" value="UniProtKB-SubCell"/>
</dbReference>
<dbReference type="GO" id="GO:0097381">
    <property type="term" value="C:photoreceptor disc membrane"/>
    <property type="evidence" value="ECO:0000314"/>
    <property type="project" value="AgBase"/>
</dbReference>
<dbReference type="GO" id="GO:0042622">
    <property type="term" value="C:photoreceptor outer segment membrane"/>
    <property type="evidence" value="ECO:0000314"/>
    <property type="project" value="AgBase"/>
</dbReference>
<dbReference type="GO" id="GO:0003677">
    <property type="term" value="F:DNA binding"/>
    <property type="evidence" value="ECO:0007669"/>
    <property type="project" value="UniProtKB-KW"/>
</dbReference>
<dbReference type="GO" id="GO:0071949">
    <property type="term" value="F:FAD binding"/>
    <property type="evidence" value="ECO:0007669"/>
    <property type="project" value="TreeGrafter"/>
</dbReference>
<dbReference type="GO" id="GO:0009881">
    <property type="term" value="F:photoreceptor activity"/>
    <property type="evidence" value="ECO:0007669"/>
    <property type="project" value="UniProtKB-KW"/>
</dbReference>
<dbReference type="GO" id="GO:0032922">
    <property type="term" value="P:circadian regulation of gene expression"/>
    <property type="evidence" value="ECO:0007669"/>
    <property type="project" value="TreeGrafter"/>
</dbReference>
<dbReference type="GO" id="GO:0007623">
    <property type="term" value="P:circadian rhythm"/>
    <property type="evidence" value="ECO:0000250"/>
    <property type="project" value="UniProtKB"/>
</dbReference>
<dbReference type="GO" id="GO:0043153">
    <property type="term" value="P:entrainment of circadian clock by photoperiod"/>
    <property type="evidence" value="ECO:0007669"/>
    <property type="project" value="TreeGrafter"/>
</dbReference>
<dbReference type="GO" id="GO:0045892">
    <property type="term" value="P:negative regulation of DNA-templated transcription"/>
    <property type="evidence" value="ECO:0007669"/>
    <property type="project" value="TreeGrafter"/>
</dbReference>
<dbReference type="GO" id="GO:0045721">
    <property type="term" value="P:negative regulation of gluconeogenesis"/>
    <property type="evidence" value="ECO:0000250"/>
    <property type="project" value="UniProtKB"/>
</dbReference>
<dbReference type="GO" id="GO:0009416">
    <property type="term" value="P:response to light stimulus"/>
    <property type="evidence" value="ECO:0000250"/>
    <property type="project" value="UniProtKB"/>
</dbReference>
<dbReference type="FunFam" id="1.10.579.10:FF:000001">
    <property type="entry name" value="Cryptochrome 1"/>
    <property type="match status" value="1"/>
</dbReference>
<dbReference type="FunFam" id="1.25.40.80:FF:000001">
    <property type="entry name" value="Cryptochrome circadian regulator 2"/>
    <property type="match status" value="1"/>
</dbReference>
<dbReference type="FunFam" id="1.25.40.80:FF:000003">
    <property type="entry name" value="cryptochrome-1 isoform X1"/>
    <property type="match status" value="1"/>
</dbReference>
<dbReference type="FunFam" id="3.40.50.620:FF:000099">
    <property type="entry name" value="cryptochrome-1 isoform X1"/>
    <property type="match status" value="1"/>
</dbReference>
<dbReference type="Gene3D" id="1.25.40.80">
    <property type="match status" value="1"/>
</dbReference>
<dbReference type="Gene3D" id="1.10.579.10">
    <property type="entry name" value="DNA Cyclobutane Dipyrimidine Photolyase, subunit A, domain 3"/>
    <property type="match status" value="1"/>
</dbReference>
<dbReference type="Gene3D" id="3.40.50.620">
    <property type="entry name" value="HUPs"/>
    <property type="match status" value="1"/>
</dbReference>
<dbReference type="InterPro" id="IPR036134">
    <property type="entry name" value="Crypto/Photolyase_FAD-like_sf"/>
</dbReference>
<dbReference type="InterPro" id="IPR036155">
    <property type="entry name" value="Crypto/Photolyase_N_sf"/>
</dbReference>
<dbReference type="InterPro" id="IPR005101">
    <property type="entry name" value="Cryptochr/Photolyase_FAD-bd"/>
</dbReference>
<dbReference type="InterPro" id="IPR002081">
    <property type="entry name" value="Cryptochrome/DNA_photolyase_1"/>
</dbReference>
<dbReference type="InterPro" id="IPR006050">
    <property type="entry name" value="DNA_photolyase_N"/>
</dbReference>
<dbReference type="InterPro" id="IPR014729">
    <property type="entry name" value="Rossmann-like_a/b/a_fold"/>
</dbReference>
<dbReference type="PANTHER" id="PTHR11455">
    <property type="entry name" value="CRYPTOCHROME"/>
    <property type="match status" value="1"/>
</dbReference>
<dbReference type="PANTHER" id="PTHR11455:SF16">
    <property type="entry name" value="CRYPTOCHROME-1"/>
    <property type="match status" value="1"/>
</dbReference>
<dbReference type="Pfam" id="PF00875">
    <property type="entry name" value="DNA_photolyase"/>
    <property type="match status" value="1"/>
</dbReference>
<dbReference type="Pfam" id="PF03441">
    <property type="entry name" value="FAD_binding_7"/>
    <property type="match status" value="1"/>
</dbReference>
<dbReference type="SUPFAM" id="SSF48173">
    <property type="entry name" value="Cryptochrome/photolyase FAD-binding domain"/>
    <property type="match status" value="1"/>
</dbReference>
<dbReference type="SUPFAM" id="SSF52425">
    <property type="entry name" value="Cryptochrome/photolyase, N-terminal domain"/>
    <property type="match status" value="1"/>
</dbReference>
<dbReference type="PROSITE" id="PS51645">
    <property type="entry name" value="PHR_CRY_ALPHA_BETA"/>
    <property type="match status" value="1"/>
</dbReference>
<accession>Q5IZC5</accession>
<accession>Q5IZC6</accession>
<protein>
    <recommendedName>
        <fullName>Cryptochrome-1</fullName>
    </recommendedName>
</protein>
<comment type="function">
    <text evidence="2 3">Transcriptional repressor which forms a core component of the circadian clock. The circadian clock, an internal time-keeping system, regulates various physiological processes through the generation of approximately 24 hour circadian rhythms in gene expression, which are translated into rhythms in metabolism and behavior. It is derived from the Latin roots 'circa' (about) and 'diem' (day) and acts as an important regulator of a wide array of physiological functions including metabolism, sleep, body temperature, blood pressure, endocrine, immune, cardiovascular, and renal function. Consists of two major components: the central clock, residing in the suprachiasmatic nucleus (SCN) of the brain, and the peripheral clocks that are present in nearly every tissue and organ system. Both the central and peripheral clocks can be reset by environmental cues, also known as Zeitgebers (German for 'timegivers'). The predominant Zeitgeber for the central clock is light, which is sensed by retina and signals directly to the SCN. The central clock entrains the peripheral clocks through neuronal and hormonal signals, body temperature and feeding-related cues, aligning all clocks with the external light/dark cycle. Circadian rhythms allow an organism to achieve temporal homeostasis with its environment at the molecular level by regulating gene expression to create a peak of protein expression once every 24 hours to control when a particular physiological process is most active with respect to the solar day. Transcription and translation of core clock components (CLOCK, NPAS2, BMAL1, BMAL2, PER1, PER2, PER3, CRY1 and CRY2) plays a critical role in rhythm generation, whereas delays imposed by post-translational modifications (PTMs) are important for determining the period (tau) of the rhythms (tau refers to the period of a rhythm and is the length, in time, of one complete cycle). A diurnal rhythm is synchronized with the day/night cycle, while the ultradian and infradian rhythms have a period shorter and longer than 24 hours, respectively. Disruptions in the circadian rhythms contribute to the pathology of cardiovascular diseases, cancer, metabolic syndromes and aging. A transcription/translation feedback loop (TTFL) forms the core of the molecular circadian clock mechanism. Transcription factors, CLOCK or NPAS2 and BMAL1 or BMAL2, form the positive limb of the feedback loop, act in the form of a heterodimer and activate the transcription of core clock genes and clock-controlled genes (involved in key metabolic processes), harboring E-box elements (5'-CACGTG-3') within their promoters. The core clock genes: PER1/2/3 and CRY1/2 which are transcriptional repressors form the negative limb of the feedback loop and interact with the CLOCK|NPAS2-BMAL1|BMAL2 heterodimer inhibiting its activity and thereby negatively regulating their own expression. This heterodimer also activates nuclear receptors NR1D1/2 and RORA/B/G, which form a second feedback loop and which activate and repress BMAL1 transcription, respectively. CRY1 and CRY2 have redundant functions but also differential and selective contributions at least in defining the pace of the SCN circadian clock and its circadian transcriptional outputs. More potent transcriptional repressor in cerebellum and liver than CRY2, though more effective in lengthening the period of the SCN oscillator. On its side, CRY2 seems to play a critical role in tuning SCN circadian period by opposing the action of CRY1. With CRY2, is dispensable for circadian rhythm generation but necessary for the development of intercellular networks for rhythm synchrony. Capable of translocating circadian clock core proteins such as PER proteins to the nucleus. Interacts with CLOCK-BMAL1 independently of PER proteins and is found at CLOCK-BMAL1-bound sites, suggesting that CRY may act as a molecular gatekeeper to maintain CLOCK-BMAL1 in a poised and repressed state until the proper time for transcriptional activation.</text>
</comment>
<comment type="cofactor">
    <cofactor evidence="2">
        <name>FAD</name>
        <dbReference type="ChEBI" id="CHEBI:57692"/>
    </cofactor>
    <text evidence="2">Binds 1 FAD per subunit. Only a minority of the protein molecules contain bound FAD. Contrary to the situation in photolyases, the FAD is bound in a shallow, surface-exposed pocket.</text>
</comment>
<comment type="cofactor">
    <cofactor evidence="1">
        <name>(6R)-5,10-methylene-5,6,7,8-tetrahydrofolate</name>
        <dbReference type="ChEBI" id="CHEBI:15636"/>
    </cofactor>
    <text evidence="1">Binds 1 5,10-methenyltetrahydrofolate (MTHF) non-covalently per subunit.</text>
</comment>
<comment type="subunit">
    <text evidence="2">Component of the circadian core oscillator, which includes the CRY proteins, CLOCK or NPAS2, BMAL1 or BMAL2, CSNK1E, and the PER proteins.</text>
</comment>
<comment type="subcellular location">
    <subcellularLocation>
        <location evidence="2">Cytoplasm</location>
    </subcellularLocation>
    <subcellularLocation>
        <location evidence="2">Nucleus</location>
    </subcellularLocation>
    <text evidence="2">Translocated to the nucleus through interaction with other Clock proteins such as PER2 or BMAL1.</text>
</comment>
<comment type="alternative products">
    <event type="alternative splicing"/>
    <isoform>
        <id>Q5IZC5-1</id>
        <name>1a</name>
        <sequence type="displayed"/>
    </isoform>
    <isoform>
        <id>Q5IZC5-2</id>
        <name>1b</name>
        <sequence type="described" ref="VSP_021651 VSP_021652"/>
    </isoform>
</comment>
<comment type="tissue specificity">
    <text evidence="5">Expressed in the retina.</text>
</comment>
<comment type="similarity">
    <text evidence="7">Belongs to the DNA photolyase class-1 family.</text>
</comment>